<reference key="1">
    <citation type="journal article" date="2004" name="Nat. Genet.">
        <title>Complete sequencing and characterization of 21,243 full-length human cDNAs.</title>
        <authorList>
            <person name="Ota T."/>
            <person name="Suzuki Y."/>
            <person name="Nishikawa T."/>
            <person name="Otsuki T."/>
            <person name="Sugiyama T."/>
            <person name="Irie R."/>
            <person name="Wakamatsu A."/>
            <person name="Hayashi K."/>
            <person name="Sato H."/>
            <person name="Nagai K."/>
            <person name="Kimura K."/>
            <person name="Makita H."/>
            <person name="Sekine M."/>
            <person name="Obayashi M."/>
            <person name="Nishi T."/>
            <person name="Shibahara T."/>
            <person name="Tanaka T."/>
            <person name="Ishii S."/>
            <person name="Yamamoto J."/>
            <person name="Saito K."/>
            <person name="Kawai Y."/>
            <person name="Isono Y."/>
            <person name="Nakamura Y."/>
            <person name="Nagahari K."/>
            <person name="Murakami K."/>
            <person name="Yasuda T."/>
            <person name="Iwayanagi T."/>
            <person name="Wagatsuma M."/>
            <person name="Shiratori A."/>
            <person name="Sudo H."/>
            <person name="Hosoiri T."/>
            <person name="Kaku Y."/>
            <person name="Kodaira H."/>
            <person name="Kondo H."/>
            <person name="Sugawara M."/>
            <person name="Takahashi M."/>
            <person name="Kanda K."/>
            <person name="Yokoi T."/>
            <person name="Furuya T."/>
            <person name="Kikkawa E."/>
            <person name="Omura Y."/>
            <person name="Abe K."/>
            <person name="Kamihara K."/>
            <person name="Katsuta N."/>
            <person name="Sato K."/>
            <person name="Tanikawa M."/>
            <person name="Yamazaki M."/>
            <person name="Ninomiya K."/>
            <person name="Ishibashi T."/>
            <person name="Yamashita H."/>
            <person name="Murakawa K."/>
            <person name="Fujimori K."/>
            <person name="Tanai H."/>
            <person name="Kimata M."/>
            <person name="Watanabe M."/>
            <person name="Hiraoka S."/>
            <person name="Chiba Y."/>
            <person name="Ishida S."/>
            <person name="Ono Y."/>
            <person name="Takiguchi S."/>
            <person name="Watanabe S."/>
            <person name="Yosida M."/>
            <person name="Hotuta T."/>
            <person name="Kusano J."/>
            <person name="Kanehori K."/>
            <person name="Takahashi-Fujii A."/>
            <person name="Hara H."/>
            <person name="Tanase T.-O."/>
            <person name="Nomura Y."/>
            <person name="Togiya S."/>
            <person name="Komai F."/>
            <person name="Hara R."/>
            <person name="Takeuchi K."/>
            <person name="Arita M."/>
            <person name="Imose N."/>
            <person name="Musashino K."/>
            <person name="Yuuki H."/>
            <person name="Oshima A."/>
            <person name="Sasaki N."/>
            <person name="Aotsuka S."/>
            <person name="Yoshikawa Y."/>
            <person name="Matsunawa H."/>
            <person name="Ichihara T."/>
            <person name="Shiohata N."/>
            <person name="Sano S."/>
            <person name="Moriya S."/>
            <person name="Momiyama H."/>
            <person name="Satoh N."/>
            <person name="Takami S."/>
            <person name="Terashima Y."/>
            <person name="Suzuki O."/>
            <person name="Nakagawa S."/>
            <person name="Senoh A."/>
            <person name="Mizoguchi H."/>
            <person name="Goto Y."/>
            <person name="Shimizu F."/>
            <person name="Wakebe H."/>
            <person name="Hishigaki H."/>
            <person name="Watanabe T."/>
            <person name="Sugiyama A."/>
            <person name="Takemoto M."/>
            <person name="Kawakami B."/>
            <person name="Yamazaki M."/>
            <person name="Watanabe K."/>
            <person name="Kumagai A."/>
            <person name="Itakura S."/>
            <person name="Fukuzumi Y."/>
            <person name="Fujimori Y."/>
            <person name="Komiyama M."/>
            <person name="Tashiro H."/>
            <person name="Tanigami A."/>
            <person name="Fujiwara T."/>
            <person name="Ono T."/>
            <person name="Yamada K."/>
            <person name="Fujii Y."/>
            <person name="Ozaki K."/>
            <person name="Hirao M."/>
            <person name="Ohmori Y."/>
            <person name="Kawabata A."/>
            <person name="Hikiji T."/>
            <person name="Kobatake N."/>
            <person name="Inagaki H."/>
            <person name="Ikema Y."/>
            <person name="Okamoto S."/>
            <person name="Okitani R."/>
            <person name="Kawakami T."/>
            <person name="Noguchi S."/>
            <person name="Itoh T."/>
            <person name="Shigeta K."/>
            <person name="Senba T."/>
            <person name="Matsumura K."/>
            <person name="Nakajima Y."/>
            <person name="Mizuno T."/>
            <person name="Morinaga M."/>
            <person name="Sasaki M."/>
            <person name="Togashi T."/>
            <person name="Oyama M."/>
            <person name="Hata H."/>
            <person name="Watanabe M."/>
            <person name="Komatsu T."/>
            <person name="Mizushima-Sugano J."/>
            <person name="Satoh T."/>
            <person name="Shirai Y."/>
            <person name="Takahashi Y."/>
            <person name="Nakagawa K."/>
            <person name="Okumura K."/>
            <person name="Nagase T."/>
            <person name="Nomura N."/>
            <person name="Kikuchi H."/>
            <person name="Masuho Y."/>
            <person name="Yamashita R."/>
            <person name="Nakai K."/>
            <person name="Yada T."/>
            <person name="Nakamura Y."/>
            <person name="Ohara O."/>
            <person name="Isogai T."/>
            <person name="Sugano S."/>
        </authorList>
    </citation>
    <scope>NUCLEOTIDE SEQUENCE [LARGE SCALE MRNA] (ISOFORM 2)</scope>
    <scope>NUCLEOTIDE SEQUENCE [LARGE SCALE MRNA] OF 84-460 (ISOFORM 1)</scope>
    <source>
        <tissue>Embryo</tissue>
        <tissue>Teratocarcinoma</tissue>
    </source>
</reference>
<reference key="2">
    <citation type="journal article" date="2004" name="Nature">
        <title>The sequence and analysis of duplication-rich human chromosome 16.</title>
        <authorList>
            <person name="Martin J."/>
            <person name="Han C."/>
            <person name="Gordon L.A."/>
            <person name="Terry A."/>
            <person name="Prabhakar S."/>
            <person name="She X."/>
            <person name="Xie G."/>
            <person name="Hellsten U."/>
            <person name="Chan Y.M."/>
            <person name="Altherr M."/>
            <person name="Couronne O."/>
            <person name="Aerts A."/>
            <person name="Bajorek E."/>
            <person name="Black S."/>
            <person name="Blumer H."/>
            <person name="Branscomb E."/>
            <person name="Brown N.C."/>
            <person name="Bruno W.J."/>
            <person name="Buckingham J.M."/>
            <person name="Callen D.F."/>
            <person name="Campbell C.S."/>
            <person name="Campbell M.L."/>
            <person name="Campbell E.W."/>
            <person name="Caoile C."/>
            <person name="Challacombe J.F."/>
            <person name="Chasteen L.A."/>
            <person name="Chertkov O."/>
            <person name="Chi H.C."/>
            <person name="Christensen M."/>
            <person name="Clark L.M."/>
            <person name="Cohn J.D."/>
            <person name="Denys M."/>
            <person name="Detter J.C."/>
            <person name="Dickson M."/>
            <person name="Dimitrijevic-Bussod M."/>
            <person name="Escobar J."/>
            <person name="Fawcett J.J."/>
            <person name="Flowers D."/>
            <person name="Fotopulos D."/>
            <person name="Glavina T."/>
            <person name="Gomez M."/>
            <person name="Gonzales E."/>
            <person name="Goodstein D."/>
            <person name="Goodwin L.A."/>
            <person name="Grady D.L."/>
            <person name="Grigoriev I."/>
            <person name="Groza M."/>
            <person name="Hammon N."/>
            <person name="Hawkins T."/>
            <person name="Haydu L."/>
            <person name="Hildebrand C.E."/>
            <person name="Huang W."/>
            <person name="Israni S."/>
            <person name="Jett J."/>
            <person name="Jewett P.B."/>
            <person name="Kadner K."/>
            <person name="Kimball H."/>
            <person name="Kobayashi A."/>
            <person name="Krawczyk M.-C."/>
            <person name="Leyba T."/>
            <person name="Longmire J.L."/>
            <person name="Lopez F."/>
            <person name="Lou Y."/>
            <person name="Lowry S."/>
            <person name="Ludeman T."/>
            <person name="Manohar C.F."/>
            <person name="Mark G.A."/>
            <person name="McMurray K.L."/>
            <person name="Meincke L.J."/>
            <person name="Morgan J."/>
            <person name="Moyzis R.K."/>
            <person name="Mundt M.O."/>
            <person name="Munk A.C."/>
            <person name="Nandkeshwar R.D."/>
            <person name="Pitluck S."/>
            <person name="Pollard M."/>
            <person name="Predki P."/>
            <person name="Parson-Quintana B."/>
            <person name="Ramirez L."/>
            <person name="Rash S."/>
            <person name="Retterer J."/>
            <person name="Ricke D.O."/>
            <person name="Robinson D.L."/>
            <person name="Rodriguez A."/>
            <person name="Salamov A."/>
            <person name="Saunders E.H."/>
            <person name="Scott D."/>
            <person name="Shough T."/>
            <person name="Stallings R.L."/>
            <person name="Stalvey M."/>
            <person name="Sutherland R.D."/>
            <person name="Tapia R."/>
            <person name="Tesmer J.G."/>
            <person name="Thayer N."/>
            <person name="Thompson L.S."/>
            <person name="Tice H."/>
            <person name="Torney D.C."/>
            <person name="Tran-Gyamfi M."/>
            <person name="Tsai M."/>
            <person name="Ulanovsky L.E."/>
            <person name="Ustaszewska A."/>
            <person name="Vo N."/>
            <person name="White P.S."/>
            <person name="Williams A.L."/>
            <person name="Wills P.L."/>
            <person name="Wu J.-R."/>
            <person name="Wu K."/>
            <person name="Yang J."/>
            <person name="DeJong P."/>
            <person name="Bruce D."/>
            <person name="Doggett N.A."/>
            <person name="Deaven L."/>
            <person name="Schmutz J."/>
            <person name="Grimwood J."/>
            <person name="Richardson P."/>
            <person name="Rokhsar D.S."/>
            <person name="Eichler E.E."/>
            <person name="Gilna P."/>
            <person name="Lucas S.M."/>
            <person name="Myers R.M."/>
            <person name="Rubin E.M."/>
            <person name="Pennacchio L.A."/>
        </authorList>
    </citation>
    <scope>NUCLEOTIDE SEQUENCE [LARGE SCALE GENOMIC DNA]</scope>
</reference>
<reference key="3">
    <citation type="journal article" date="1998" name="DNA Cell Biol.">
        <title>Cloning and analysis of the cDNA for human fibrosin, a novel fibrogenic lymphokine.</title>
        <authorList>
            <person name="Prakash S."/>
            <person name="Robbins P.W."/>
        </authorList>
    </citation>
    <scope>CHARACTERIZATION OF 3'-UTR</scope>
    <source>
        <tissue>Placenta</tissue>
        <tissue>T-cell</tissue>
    </source>
</reference>
<reference key="4">
    <citation type="journal article" date="2008" name="Proc. Natl. Acad. Sci. U.S.A.">
        <title>A quantitative atlas of mitotic phosphorylation.</title>
        <authorList>
            <person name="Dephoure N."/>
            <person name="Zhou C."/>
            <person name="Villen J."/>
            <person name="Beausoleil S.A."/>
            <person name="Bakalarski C.E."/>
            <person name="Elledge S.J."/>
            <person name="Gygi S.P."/>
        </authorList>
    </citation>
    <scope>IDENTIFICATION BY MASS SPECTROMETRY [LARGE SCALE ANALYSIS]</scope>
    <source>
        <tissue>Cervix carcinoma</tissue>
    </source>
</reference>
<reference key="5">
    <citation type="journal article" date="2013" name="J. Proteome Res.">
        <title>Toward a comprehensive characterization of a human cancer cell phosphoproteome.</title>
        <authorList>
            <person name="Zhou H."/>
            <person name="Di Palma S."/>
            <person name="Preisinger C."/>
            <person name="Peng M."/>
            <person name="Polat A.N."/>
            <person name="Heck A.J."/>
            <person name="Mohammed S."/>
        </authorList>
    </citation>
    <scope>PHOSPHORYLATION [LARGE SCALE ANALYSIS] AT SER-281</scope>
    <scope>IDENTIFICATION BY MASS SPECTROMETRY [LARGE SCALE ANALYSIS]</scope>
    <source>
        <tissue>Erythroleukemia</tissue>
    </source>
</reference>
<reference key="6">
    <citation type="journal article" date="2014" name="Mol. Cell. Proteomics">
        <title>Immunoaffinity enrichment and mass spectrometry analysis of protein methylation.</title>
        <authorList>
            <person name="Guo A."/>
            <person name="Gu H."/>
            <person name="Zhou J."/>
            <person name="Mulhern D."/>
            <person name="Wang Y."/>
            <person name="Lee K.A."/>
            <person name="Yang V."/>
            <person name="Aguiar M."/>
            <person name="Kornhauser J."/>
            <person name="Jia X."/>
            <person name="Ren J."/>
            <person name="Beausoleil S.A."/>
            <person name="Silva J.C."/>
            <person name="Vemulapalli V."/>
            <person name="Bedford M.T."/>
            <person name="Comb M.J."/>
        </authorList>
    </citation>
    <scope>METHYLATION [LARGE SCALE ANALYSIS] AT ARG-229 AND ARG-239</scope>
    <scope>IDENTIFICATION BY MASS SPECTROMETRY [LARGE SCALE ANALYSIS]</scope>
    <source>
        <tissue>Colon carcinoma</tissue>
    </source>
</reference>
<reference key="7">
    <citation type="journal article" date="2017" name="Nat. Struct. Mol. Biol.">
        <title>Site-specific mapping of the human SUMO proteome reveals co-modification with phosphorylation.</title>
        <authorList>
            <person name="Hendriks I.A."/>
            <person name="Lyon D."/>
            <person name="Young C."/>
            <person name="Jensen L.J."/>
            <person name="Vertegaal A.C."/>
            <person name="Nielsen M.L."/>
        </authorList>
    </citation>
    <scope>SUMOYLATION [LARGE SCALE ANALYSIS] AT LYS-8</scope>
    <scope>IDENTIFICATION BY MASS SPECTROMETRY [LARGE SCALE ANALYSIS]</scope>
</reference>
<evidence type="ECO:0000256" key="1">
    <source>
        <dbReference type="SAM" id="MobiDB-lite"/>
    </source>
</evidence>
<evidence type="ECO:0000303" key="2">
    <source>
    </source>
</evidence>
<evidence type="ECO:0000305" key="3"/>
<evidence type="ECO:0000305" key="4">
    <source>
    </source>
</evidence>
<evidence type="ECO:0007744" key="5">
    <source>
    </source>
</evidence>
<evidence type="ECO:0007744" key="6">
    <source>
    </source>
</evidence>
<evidence type="ECO:0007744" key="7">
    <source>
    </source>
</evidence>
<sequence length="460" mass="48388">MFEKYPGKMEGLFRHNPYTAFPPAVPGLPPGLPPAVSFGSLQGAFQPKSTNPELPPRLGPVPSGLSQKGTQIPDHFRPPLRKPGKWCAMHVRVAYMILRHQEKMKGDSHKLDFRNDLLPCLPGPYGALPPGQELSHPASLFTATGAVHAAANPFTAAPGAHGPFLSPSTHIDPFGRPTSFASLAALSNGAFGGLGSPTFNSGAVFAQKESPGAPPAFASPPDPWGRLHRSPLTFPAWVRPPEAARTPGSDKERPVERREPSITKEEKDRDLPFSRPQLRVSPATPKARAGEEGPRPTKESVRVKEERKEEAAAAAAAAAAAAAAAAAAATGPQGLHLLFERPRPPPFLGPSPPDRCAGFLEPTWLAAPPRLARPPRFYEAGEELTGPGAVAAARLYGLEPAHPLLYSRLAPPPPPAAAPGTPHLLSKTPPGALLGAPPPLVPAPRPSSPPRGPGPARADR</sequence>
<proteinExistence type="evidence at protein level"/>
<protein>
    <recommendedName>
        <fullName>Probable fibrosin-1</fullName>
    </recommendedName>
</protein>
<feature type="chain" id="PRO_0000087206" description="Probable fibrosin-1">
    <location>
        <begin position="1"/>
        <end position="460"/>
    </location>
</feature>
<feature type="region of interest" description="Disordered" evidence="1">
    <location>
        <begin position="40"/>
        <end position="79"/>
    </location>
</feature>
<feature type="region of interest" description="Disordered" evidence="1">
    <location>
        <begin position="205"/>
        <end position="311"/>
    </location>
</feature>
<feature type="region of interest" description="Disordered" evidence="1">
    <location>
        <begin position="406"/>
        <end position="460"/>
    </location>
</feature>
<feature type="compositionally biased region" description="Pro residues" evidence="1">
    <location>
        <begin position="212"/>
        <end position="223"/>
    </location>
</feature>
<feature type="compositionally biased region" description="Basic and acidic residues" evidence="1">
    <location>
        <begin position="248"/>
        <end position="272"/>
    </location>
</feature>
<feature type="compositionally biased region" description="Basic and acidic residues" evidence="1">
    <location>
        <begin position="288"/>
        <end position="311"/>
    </location>
</feature>
<feature type="compositionally biased region" description="Pro residues" evidence="1">
    <location>
        <begin position="436"/>
        <end position="453"/>
    </location>
</feature>
<feature type="modified residue" description="Asymmetric dimethylarginine" evidence="6">
    <location>
        <position position="229"/>
    </location>
</feature>
<feature type="modified residue" description="Asymmetric dimethylarginine" evidence="6">
    <location>
        <position position="239"/>
    </location>
</feature>
<feature type="modified residue" description="Phosphoserine" evidence="5">
    <location>
        <position position="281"/>
    </location>
</feature>
<feature type="cross-link" description="Glycyl lysine isopeptide (Lys-Gly) (interchain with G-Cter in SUMO2)" evidence="7">
    <location>
        <position position="8"/>
    </location>
</feature>
<feature type="splice variant" id="VSP_010991" description="In isoform 1." evidence="2">
    <original>PPGALLGAPPPLVPAPRPSSPPRGPGPARADR</original>
    <variation>FCTFLQGCPSQQFPSWLIKPSDWCCVPSLWPLCGERGLQGEEPGRDSQASPWEGGASRR</variation>
    <location>
        <begin position="429"/>
        <end position="460"/>
    </location>
</feature>
<feature type="sequence conflict" description="In Ref. 1; BAG60498." evidence="3" ref="1">
    <original>S</original>
    <variation>G</variation>
    <location>
        <position position="168"/>
    </location>
</feature>
<feature type="sequence conflict" description="In Ref. 1; BAB13872." evidence="3" ref="1">
    <original>V</original>
    <variation>A</variation>
    <location>
        <position position="255"/>
    </location>
</feature>
<feature type="sequence conflict" description="In Ref. 1; BAG60498." evidence="3" ref="1">
    <original>A</original>
    <variation>V</variation>
    <location>
        <position position="283"/>
    </location>
</feature>
<keyword id="KW-0025">Alternative splicing</keyword>
<keyword id="KW-1017">Isopeptide bond</keyword>
<keyword id="KW-0488">Methylation</keyword>
<keyword id="KW-0597">Phosphoprotein</keyword>
<keyword id="KW-1267">Proteomics identification</keyword>
<keyword id="KW-1185">Reference proteome</keyword>
<keyword id="KW-0832">Ubl conjugation</keyword>
<accession>Q9HAH7</accession>
<accession>B4DP86</accession>
<accession>Q96CI9</accession>
<accession>Q9H9X4</accession>
<comment type="alternative products">
    <event type="alternative splicing"/>
    <isoform>
        <id>Q9HAH7-2</id>
        <name>2</name>
        <sequence type="displayed"/>
    </isoform>
    <isoform>
        <id>Q9HAH7-1</id>
        <name>1</name>
        <sequence type="described" ref="VSP_010991"/>
    </isoform>
</comment>
<comment type="caution">
    <text evidence="4">Prakash et al. cloned a cDNA corresponding to the 3'UTR of the last exon of the gene (PubMed:9809749). They have shown that a synthetic peptide derived from this sequence could stimulate fibroblasts growth in vitro, and that this protein could be a fibrogenic lymphokine, that could stimulate several biological activities related to scarring. It would be expressed in placenta, skeletal muscle, pancreas, thymus, testis, and leukocytes. However, it was not confirmed by in vivo data.</text>
</comment>
<comment type="sequence caution" evidence="3">
    <conflict type="erroneous initiation">
        <sequence resource="EMBL-CDS" id="BAB13872"/>
    </conflict>
    <text>Truncated N-terminus.</text>
</comment>
<comment type="sequence caution" evidence="3">
    <conflict type="erroneous initiation">
        <sequence resource="EMBL-CDS" id="BAB14094"/>
    </conflict>
    <text>Truncated N-terminus.</text>
</comment>
<dbReference type="EMBL" id="AK021680">
    <property type="protein sequence ID" value="BAB13872.1"/>
    <property type="status" value="ALT_INIT"/>
    <property type="molecule type" value="mRNA"/>
</dbReference>
<dbReference type="EMBL" id="AK022551">
    <property type="protein sequence ID" value="BAB14094.1"/>
    <property type="status" value="ALT_INIT"/>
    <property type="molecule type" value="mRNA"/>
</dbReference>
<dbReference type="EMBL" id="AK298229">
    <property type="protein sequence ID" value="BAG60498.1"/>
    <property type="molecule type" value="mRNA"/>
</dbReference>
<dbReference type="EMBL" id="AC093249">
    <property type="status" value="NOT_ANNOTATED_CDS"/>
    <property type="molecule type" value="Genomic_DNA"/>
</dbReference>
<dbReference type="RefSeq" id="NP_001098549.2">
    <property type="nucleotide sequence ID" value="NM_001105079.2"/>
</dbReference>
<dbReference type="BioGRID" id="122132">
    <property type="interactions" value="107"/>
</dbReference>
<dbReference type="CORUM" id="Q9HAH7"/>
<dbReference type="DIP" id="DIP-61357N"/>
<dbReference type="FunCoup" id="Q9HAH7">
    <property type="interactions" value="726"/>
</dbReference>
<dbReference type="IntAct" id="Q9HAH7">
    <property type="interactions" value="53"/>
</dbReference>
<dbReference type="MINT" id="Q9HAH7"/>
<dbReference type="STRING" id="9606.ENSP00000348489"/>
<dbReference type="GlyGen" id="Q9HAH7">
    <property type="glycosylation" value="1 site, 1 O-linked glycan (1 site)"/>
</dbReference>
<dbReference type="iPTMnet" id="Q9HAH7"/>
<dbReference type="PhosphoSitePlus" id="Q9HAH7"/>
<dbReference type="BioMuta" id="FBRS"/>
<dbReference type="DMDM" id="332278207"/>
<dbReference type="jPOST" id="Q9HAH7"/>
<dbReference type="MassIVE" id="Q9HAH7"/>
<dbReference type="PaxDb" id="9606-ENSP00000348489"/>
<dbReference type="PeptideAtlas" id="Q9HAH7"/>
<dbReference type="ProteomicsDB" id="81404">
    <molecule id="Q9HAH7-2"/>
</dbReference>
<dbReference type="ProteomicsDB" id="81405">
    <molecule id="Q9HAH7-1"/>
</dbReference>
<dbReference type="Pumba" id="Q9HAH7"/>
<dbReference type="Antibodypedia" id="43660">
    <property type="antibodies" value="74 antibodies from 15 providers"/>
</dbReference>
<dbReference type="DNASU" id="64319"/>
<dbReference type="Ensembl" id="ENST00000287468.5">
    <molecule id="Q9HAH7-2"/>
    <property type="protein sequence ID" value="ENSP00000287468.5"/>
    <property type="gene ID" value="ENSG00000156860.16"/>
</dbReference>
<dbReference type="GeneID" id="64319"/>
<dbReference type="KEGG" id="hsa:64319"/>
<dbReference type="UCSC" id="uc002dzd.4">
    <molecule id="Q9HAH7-2"/>
    <property type="organism name" value="human"/>
</dbReference>
<dbReference type="AGR" id="HGNC:20442"/>
<dbReference type="CTD" id="64319"/>
<dbReference type="DisGeNET" id="64319"/>
<dbReference type="GeneCards" id="FBRS"/>
<dbReference type="HGNC" id="HGNC:20442">
    <property type="gene designation" value="FBRS"/>
</dbReference>
<dbReference type="HPA" id="ENSG00000156860">
    <property type="expression patterns" value="Low tissue specificity"/>
</dbReference>
<dbReference type="MIM" id="608601">
    <property type="type" value="gene"/>
</dbReference>
<dbReference type="neXtProt" id="NX_Q9HAH7"/>
<dbReference type="OpenTargets" id="ENSG00000156860"/>
<dbReference type="PharmGKB" id="PA162388128"/>
<dbReference type="VEuPathDB" id="HostDB:ENSG00000156860"/>
<dbReference type="eggNOG" id="ENOG502QT69">
    <property type="taxonomic scope" value="Eukaryota"/>
</dbReference>
<dbReference type="GeneTree" id="ENSGT00940000161032"/>
<dbReference type="HOGENOM" id="CLU_049409_0_0_1"/>
<dbReference type="InParanoid" id="Q9HAH7"/>
<dbReference type="OMA" id="PHGHMFE"/>
<dbReference type="OrthoDB" id="10060000at2759"/>
<dbReference type="PAN-GO" id="Q9HAH7">
    <property type="GO annotations" value="0 GO annotations based on evolutionary models"/>
</dbReference>
<dbReference type="PathwayCommons" id="Q9HAH7"/>
<dbReference type="SignaLink" id="Q9HAH7"/>
<dbReference type="BioGRID-ORCS" id="64319">
    <property type="hits" value="32 hits in 281 CRISPR screens"/>
</dbReference>
<dbReference type="ChiTaRS" id="FBRS">
    <property type="organism name" value="human"/>
</dbReference>
<dbReference type="GeneWiki" id="FBRS"/>
<dbReference type="GenomeRNAi" id="64319"/>
<dbReference type="Pharos" id="Q9HAH7">
    <property type="development level" value="Tbio"/>
</dbReference>
<dbReference type="PRO" id="PR:Q9HAH7"/>
<dbReference type="Proteomes" id="UP000005640">
    <property type="component" value="Chromosome 16"/>
</dbReference>
<dbReference type="RNAct" id="Q9HAH7">
    <property type="molecule type" value="protein"/>
</dbReference>
<dbReference type="Bgee" id="ENSG00000156860">
    <property type="expression patterns" value="Expressed in left testis and 201 other cell types or tissues"/>
</dbReference>
<dbReference type="ExpressionAtlas" id="Q9HAH7">
    <property type="expression patterns" value="baseline and differential"/>
</dbReference>
<dbReference type="InterPro" id="IPR023246">
    <property type="entry name" value="AUTS2"/>
</dbReference>
<dbReference type="PANTHER" id="PTHR14429:SF24">
    <property type="entry name" value="FIBROSIN"/>
    <property type="match status" value="1"/>
</dbReference>
<dbReference type="PANTHER" id="PTHR14429">
    <property type="entry name" value="FIBROSIN FAMILY MEMBER"/>
    <property type="match status" value="1"/>
</dbReference>
<dbReference type="Pfam" id="PF15336">
    <property type="entry name" value="Auts2"/>
    <property type="match status" value="1"/>
</dbReference>
<dbReference type="PRINTS" id="PR02044">
    <property type="entry name" value="FIBROSIN1LPF"/>
</dbReference>
<name>FBRS_HUMAN</name>
<organism>
    <name type="scientific">Homo sapiens</name>
    <name type="common">Human</name>
    <dbReference type="NCBI Taxonomy" id="9606"/>
    <lineage>
        <taxon>Eukaryota</taxon>
        <taxon>Metazoa</taxon>
        <taxon>Chordata</taxon>
        <taxon>Craniata</taxon>
        <taxon>Vertebrata</taxon>
        <taxon>Euteleostomi</taxon>
        <taxon>Mammalia</taxon>
        <taxon>Eutheria</taxon>
        <taxon>Euarchontoglires</taxon>
        <taxon>Primates</taxon>
        <taxon>Haplorrhini</taxon>
        <taxon>Catarrhini</taxon>
        <taxon>Hominidae</taxon>
        <taxon>Homo</taxon>
    </lineage>
</organism>
<gene>
    <name type="primary">FBRS</name>
    <name type="synonym">FBS</name>
    <name type="synonym">FBS1</name>
</gene>